<feature type="chain" id="PRO_0000386663" description="Uncharacterized protein YkzM">
    <location>
        <begin position="1"/>
        <end position="72"/>
    </location>
</feature>
<accession>C0H3Z7</accession>
<sequence>MSKDKQQKKAVHTKSREALFDTADLIKHAKELFGVKPDILQGALFGVDQPRMTKSEANQLIQTFLTKEVMSS</sequence>
<protein>
    <recommendedName>
        <fullName>Uncharacterized protein YkzM</fullName>
    </recommendedName>
</protein>
<proteinExistence type="predicted"/>
<organism>
    <name type="scientific">Bacillus subtilis (strain 168)</name>
    <dbReference type="NCBI Taxonomy" id="224308"/>
    <lineage>
        <taxon>Bacteria</taxon>
        <taxon>Bacillati</taxon>
        <taxon>Bacillota</taxon>
        <taxon>Bacilli</taxon>
        <taxon>Bacillales</taxon>
        <taxon>Bacillaceae</taxon>
        <taxon>Bacillus</taxon>
    </lineage>
</organism>
<keyword id="KW-1185">Reference proteome</keyword>
<dbReference type="EMBL" id="AL009126">
    <property type="protein sequence ID" value="CAX52604.1"/>
    <property type="molecule type" value="Genomic_DNA"/>
</dbReference>
<dbReference type="RefSeq" id="WP_003232679.1">
    <property type="nucleotide sequence ID" value="NZ_OZ025638.1"/>
</dbReference>
<dbReference type="RefSeq" id="YP_003097714.1">
    <property type="nucleotide sequence ID" value="NC_000964.3"/>
</dbReference>
<dbReference type="SMR" id="C0H3Z7"/>
<dbReference type="FunCoup" id="C0H3Z7">
    <property type="interactions" value="34"/>
</dbReference>
<dbReference type="STRING" id="224308.BSU12649"/>
<dbReference type="PaxDb" id="224308-BSU12649"/>
<dbReference type="EnsemblBacteria" id="CAX52604">
    <property type="protein sequence ID" value="CAX52604"/>
    <property type="gene ID" value="BSU_12649"/>
</dbReference>
<dbReference type="GeneID" id="8303162"/>
<dbReference type="KEGG" id="bsu:BSU12649"/>
<dbReference type="PATRIC" id="fig|224308.179.peg.1370"/>
<dbReference type="eggNOG" id="ENOG502ZGS5">
    <property type="taxonomic scope" value="Bacteria"/>
</dbReference>
<dbReference type="InParanoid" id="C0H3Z7"/>
<dbReference type="OrthoDB" id="2666545at2"/>
<dbReference type="BioCyc" id="BSUB:BSU12649-MONOMER"/>
<dbReference type="Proteomes" id="UP000001570">
    <property type="component" value="Chromosome"/>
</dbReference>
<gene>
    <name type="primary">ykzM</name>
    <name type="ordered locus">BSU12649</name>
</gene>
<reference key="1">
    <citation type="journal article" date="1997" name="Nature">
        <title>The complete genome sequence of the Gram-positive bacterium Bacillus subtilis.</title>
        <authorList>
            <person name="Kunst F."/>
            <person name="Ogasawara N."/>
            <person name="Moszer I."/>
            <person name="Albertini A.M."/>
            <person name="Alloni G."/>
            <person name="Azevedo V."/>
            <person name="Bertero M.G."/>
            <person name="Bessieres P."/>
            <person name="Bolotin A."/>
            <person name="Borchert S."/>
            <person name="Borriss R."/>
            <person name="Boursier L."/>
            <person name="Brans A."/>
            <person name="Braun M."/>
            <person name="Brignell S.C."/>
            <person name="Bron S."/>
            <person name="Brouillet S."/>
            <person name="Bruschi C.V."/>
            <person name="Caldwell B."/>
            <person name="Capuano V."/>
            <person name="Carter N.M."/>
            <person name="Choi S.-K."/>
            <person name="Codani J.-J."/>
            <person name="Connerton I.F."/>
            <person name="Cummings N.J."/>
            <person name="Daniel R.A."/>
            <person name="Denizot F."/>
            <person name="Devine K.M."/>
            <person name="Duesterhoeft A."/>
            <person name="Ehrlich S.D."/>
            <person name="Emmerson P.T."/>
            <person name="Entian K.-D."/>
            <person name="Errington J."/>
            <person name="Fabret C."/>
            <person name="Ferrari E."/>
            <person name="Foulger D."/>
            <person name="Fritz C."/>
            <person name="Fujita M."/>
            <person name="Fujita Y."/>
            <person name="Fuma S."/>
            <person name="Galizzi A."/>
            <person name="Galleron N."/>
            <person name="Ghim S.-Y."/>
            <person name="Glaser P."/>
            <person name="Goffeau A."/>
            <person name="Golightly E.J."/>
            <person name="Grandi G."/>
            <person name="Guiseppi G."/>
            <person name="Guy B.J."/>
            <person name="Haga K."/>
            <person name="Haiech J."/>
            <person name="Harwood C.R."/>
            <person name="Henaut A."/>
            <person name="Hilbert H."/>
            <person name="Holsappel S."/>
            <person name="Hosono S."/>
            <person name="Hullo M.-F."/>
            <person name="Itaya M."/>
            <person name="Jones L.-M."/>
            <person name="Joris B."/>
            <person name="Karamata D."/>
            <person name="Kasahara Y."/>
            <person name="Klaerr-Blanchard M."/>
            <person name="Klein C."/>
            <person name="Kobayashi Y."/>
            <person name="Koetter P."/>
            <person name="Koningstein G."/>
            <person name="Krogh S."/>
            <person name="Kumano M."/>
            <person name="Kurita K."/>
            <person name="Lapidus A."/>
            <person name="Lardinois S."/>
            <person name="Lauber J."/>
            <person name="Lazarevic V."/>
            <person name="Lee S.-M."/>
            <person name="Levine A."/>
            <person name="Liu H."/>
            <person name="Masuda S."/>
            <person name="Mauel C."/>
            <person name="Medigue C."/>
            <person name="Medina N."/>
            <person name="Mellado R.P."/>
            <person name="Mizuno M."/>
            <person name="Moestl D."/>
            <person name="Nakai S."/>
            <person name="Noback M."/>
            <person name="Noone D."/>
            <person name="O'Reilly M."/>
            <person name="Ogawa K."/>
            <person name="Ogiwara A."/>
            <person name="Oudega B."/>
            <person name="Park S.-H."/>
            <person name="Parro V."/>
            <person name="Pohl T.M."/>
            <person name="Portetelle D."/>
            <person name="Porwollik S."/>
            <person name="Prescott A.M."/>
            <person name="Presecan E."/>
            <person name="Pujic P."/>
            <person name="Purnelle B."/>
            <person name="Rapoport G."/>
            <person name="Rey M."/>
            <person name="Reynolds S."/>
            <person name="Rieger M."/>
            <person name="Rivolta C."/>
            <person name="Rocha E."/>
            <person name="Roche B."/>
            <person name="Rose M."/>
            <person name="Sadaie Y."/>
            <person name="Sato T."/>
            <person name="Scanlan E."/>
            <person name="Schleich S."/>
            <person name="Schroeter R."/>
            <person name="Scoffone F."/>
            <person name="Sekiguchi J."/>
            <person name="Sekowska A."/>
            <person name="Seror S.J."/>
            <person name="Serror P."/>
            <person name="Shin B.-S."/>
            <person name="Soldo B."/>
            <person name="Sorokin A."/>
            <person name="Tacconi E."/>
            <person name="Takagi T."/>
            <person name="Takahashi H."/>
            <person name="Takemaru K."/>
            <person name="Takeuchi M."/>
            <person name="Tamakoshi A."/>
            <person name="Tanaka T."/>
            <person name="Terpstra P."/>
            <person name="Tognoni A."/>
            <person name="Tosato V."/>
            <person name="Uchiyama S."/>
            <person name="Vandenbol M."/>
            <person name="Vannier F."/>
            <person name="Vassarotti A."/>
            <person name="Viari A."/>
            <person name="Wambutt R."/>
            <person name="Wedler E."/>
            <person name="Wedler H."/>
            <person name="Weitzenegger T."/>
            <person name="Winters P."/>
            <person name="Wipat A."/>
            <person name="Yamamoto H."/>
            <person name="Yamane K."/>
            <person name="Yasumoto K."/>
            <person name="Yata K."/>
            <person name="Yoshida K."/>
            <person name="Yoshikawa H.-F."/>
            <person name="Zumstein E."/>
            <person name="Yoshikawa H."/>
            <person name="Danchin A."/>
        </authorList>
    </citation>
    <scope>NUCLEOTIDE SEQUENCE [LARGE SCALE GENOMIC DNA]</scope>
    <source>
        <strain>168</strain>
    </source>
</reference>
<name>YKZM_BACSU</name>